<name>OTC1A_PSESH</name>
<accession>Q02047</accession>
<gene>
    <name evidence="5" type="primary">argF</name>
</gene>
<protein>
    <recommendedName>
        <fullName evidence="5">Ornithine carbamoyltransferase 1, anabolic</fullName>
        <shortName evidence="5">OTCase 1</shortName>
        <ecNumber evidence="7">2.1.3.3</ecNumber>
    </recommendedName>
    <alternativeName>
        <fullName evidence="7">Ornithine carbamoyltransferase 1, phaseolotoxin-sensitive</fullName>
    </alternativeName>
    <alternativeName>
        <fullName evidence="5">SOCT</fullName>
    </alternativeName>
</protein>
<reference key="1">
    <citation type="journal article" date="1992" name="J. Bacteriol.">
        <title>Origin, structure, and regulation of argK, encoding the phaseolotoxin-resistant ornithine carbamoyltransferase in Pseudomonas syringae pv. phaseolicola, and functional expression of argK in transgenic tobacco.</title>
        <authorList>
            <person name="Hatziloukas E."/>
            <person name="Panopoulos N.J."/>
        </authorList>
    </citation>
    <scope>NUCLEOTIDE SEQUENCE [GENOMIC DNA]</scope>
    <source>
        <strain>4419</strain>
    </source>
</reference>
<reference key="2">
    <citation type="submission" date="1993-12" db="EMBL/GenBank/DDBJ databases">
        <authorList>
            <person name="Mosqueda-Cano G."/>
        </authorList>
    </citation>
    <scope>NUCLEOTIDE SEQUENCE [GENOMIC DNA]</scope>
    <source>
        <strain>Isolate Texcoco</strain>
    </source>
</reference>
<reference key="3">
    <citation type="journal article" date="1987" name="Arch. Microbiol.">
        <title>Characterization of two ornithine carbamoyltransferases from Pseudomonas syringae pv. phaseolicola, the producer of phaseolotoxin.</title>
        <authorList>
            <person name="Jahn O."/>
            <person name="Sauerstein J."/>
            <person name="Reuter G."/>
        </authorList>
    </citation>
    <scope>FUNCTION AS AN OTCASE</scope>
    <scope>CATALYTIC ACTIVITY</scope>
    <scope>BIOPHYSICOCHEMICAL PROPERTIES</scope>
    <scope>ACTIVITY REGULATION</scope>
</reference>
<reference key="4">
    <citation type="journal article" date="2004" name="J. Bacteriol.">
        <title>The global arginine regulator ArgR controls expression of argF in Pseudomonas syringae pv. phaseolicola but is not required for the synthesis of phaseolotoxin or for the regulated expression of argK.</title>
        <authorList>
            <person name="Hernandez-Flores J.L."/>
            <person name="Lopez-Lopez K."/>
            <person name="Garciduenas-Pina R."/>
            <person name="Jofre-Garfias A.E."/>
            <person name="Alvarez-Morales A."/>
        </authorList>
    </citation>
    <scope>INDUCTION</scope>
</reference>
<evidence type="ECO:0000250" key="1"/>
<evidence type="ECO:0000255" key="2">
    <source>
        <dbReference type="HAMAP-Rule" id="MF_01109"/>
    </source>
</evidence>
<evidence type="ECO:0000269" key="3">
    <source>
    </source>
</evidence>
<evidence type="ECO:0000269" key="4">
    <source>
    </source>
</evidence>
<evidence type="ECO:0000303" key="5">
    <source>
    </source>
</evidence>
<evidence type="ECO:0000305" key="6"/>
<evidence type="ECO:0000305" key="7">
    <source>
    </source>
</evidence>
<sequence>MNARHFLSMMDYTPDELLGLIRRGVELKDLRIRGELFEPLKNRVLGMIFEKSSTRTRLSFEAGMIQLGGQAIFLSHRDTQLGRGEPIADSAKVMSRMLDAVMIRTYAHSNLTEFAANSRVPVINGLSDDLHPCQLLADMQTFLEHRGSIKGKTVAWIGDGNNMCNSYIEAAIQFDFQLRVACPAGYEPNPEFLALAGERVTIVRDPKAAVAGAHLVSTDVWTSMGQEEETARRMALFAPFQVTRASLDLAEKDVLFMHCLPAHRGEEISVDLLDDSRSVAWDQAENRLHAQKALLEFLVAPSHQRA</sequence>
<dbReference type="EC" id="2.1.3.3" evidence="7"/>
<dbReference type="EMBL" id="M99382">
    <property type="protein sequence ID" value="AAA25909.1"/>
    <property type="molecule type" value="Genomic_DNA"/>
</dbReference>
<dbReference type="EMBL" id="X76945">
    <property type="protein sequence ID" value="CAA54264.1"/>
    <property type="molecule type" value="Genomic_DNA"/>
</dbReference>
<dbReference type="PIR" id="S41291">
    <property type="entry name" value="S41291"/>
</dbReference>
<dbReference type="RefSeq" id="WP_011169325.1">
    <property type="nucleotide sequence ID" value="NZ_CP166925.2"/>
</dbReference>
<dbReference type="SMR" id="Q02047"/>
<dbReference type="OMA" id="DGNNVCN"/>
<dbReference type="SABIO-RK" id="Q02047"/>
<dbReference type="UniPathway" id="UPA00068">
    <property type="reaction ID" value="UER00112"/>
</dbReference>
<dbReference type="GO" id="GO:0005737">
    <property type="term" value="C:cytoplasm"/>
    <property type="evidence" value="ECO:0007669"/>
    <property type="project" value="UniProtKB-SubCell"/>
</dbReference>
<dbReference type="GO" id="GO:0016597">
    <property type="term" value="F:amino acid binding"/>
    <property type="evidence" value="ECO:0007669"/>
    <property type="project" value="InterPro"/>
</dbReference>
<dbReference type="GO" id="GO:0004585">
    <property type="term" value="F:ornithine carbamoyltransferase activity"/>
    <property type="evidence" value="ECO:0007669"/>
    <property type="project" value="UniProtKB-UniRule"/>
</dbReference>
<dbReference type="GO" id="GO:0042450">
    <property type="term" value="P:arginine biosynthetic process via ornithine"/>
    <property type="evidence" value="ECO:0007669"/>
    <property type="project" value="TreeGrafter"/>
</dbReference>
<dbReference type="GO" id="GO:0019240">
    <property type="term" value="P:citrulline biosynthetic process"/>
    <property type="evidence" value="ECO:0007669"/>
    <property type="project" value="TreeGrafter"/>
</dbReference>
<dbReference type="GO" id="GO:0006526">
    <property type="term" value="P:L-arginine biosynthetic process"/>
    <property type="evidence" value="ECO:0007669"/>
    <property type="project" value="UniProtKB-UniPathway"/>
</dbReference>
<dbReference type="FunFam" id="3.40.50.1370:FF:000008">
    <property type="entry name" value="Ornithine carbamoyltransferase"/>
    <property type="match status" value="1"/>
</dbReference>
<dbReference type="Gene3D" id="3.40.50.1370">
    <property type="entry name" value="Aspartate/ornithine carbamoyltransferase"/>
    <property type="match status" value="2"/>
</dbReference>
<dbReference type="HAMAP" id="MF_01109">
    <property type="entry name" value="OTCase"/>
    <property type="match status" value="1"/>
</dbReference>
<dbReference type="InterPro" id="IPR006132">
    <property type="entry name" value="Asp/Orn_carbamoyltranf_P-bd"/>
</dbReference>
<dbReference type="InterPro" id="IPR006130">
    <property type="entry name" value="Asp/Orn_carbamoylTrfase"/>
</dbReference>
<dbReference type="InterPro" id="IPR036901">
    <property type="entry name" value="Asp/Orn_carbamoylTrfase_sf"/>
</dbReference>
<dbReference type="InterPro" id="IPR006131">
    <property type="entry name" value="Asp_carbamoyltransf_Asp/Orn-bd"/>
</dbReference>
<dbReference type="InterPro" id="IPR002292">
    <property type="entry name" value="Orn/put_carbamltrans"/>
</dbReference>
<dbReference type="InterPro" id="IPR024904">
    <property type="entry name" value="OTCase_ArgI"/>
</dbReference>
<dbReference type="NCBIfam" id="TIGR00658">
    <property type="entry name" value="orni_carb_tr"/>
    <property type="match status" value="1"/>
</dbReference>
<dbReference type="NCBIfam" id="NF001986">
    <property type="entry name" value="PRK00779.1"/>
    <property type="match status" value="1"/>
</dbReference>
<dbReference type="PANTHER" id="PTHR45753">
    <property type="entry name" value="ORNITHINE CARBAMOYLTRANSFERASE, MITOCHONDRIAL"/>
    <property type="match status" value="1"/>
</dbReference>
<dbReference type="PANTHER" id="PTHR45753:SF3">
    <property type="entry name" value="ORNITHINE TRANSCARBAMYLASE, MITOCHONDRIAL"/>
    <property type="match status" value="1"/>
</dbReference>
<dbReference type="Pfam" id="PF00185">
    <property type="entry name" value="OTCace"/>
    <property type="match status" value="1"/>
</dbReference>
<dbReference type="Pfam" id="PF02729">
    <property type="entry name" value="OTCace_N"/>
    <property type="match status" value="1"/>
</dbReference>
<dbReference type="PRINTS" id="PR00100">
    <property type="entry name" value="AOTCASE"/>
</dbReference>
<dbReference type="PRINTS" id="PR00102">
    <property type="entry name" value="OTCASE"/>
</dbReference>
<dbReference type="SUPFAM" id="SSF53671">
    <property type="entry name" value="Aspartate/ornithine carbamoyltransferase"/>
    <property type="match status" value="1"/>
</dbReference>
<dbReference type="PROSITE" id="PS00097">
    <property type="entry name" value="CARBAMOYLTRANSFERASE"/>
    <property type="match status" value="1"/>
</dbReference>
<comment type="function">
    <text evidence="4">Reversibly catalyzes the transfer of the carbamoyl group from carbamoyl phosphate (CP) to the N(epsilon) atom of ornithine (ORN) to produce L-citrulline, which is a substrate for argininosuccinate synthetase, the enzyme involved in the final step in arginine biosynthesis.</text>
</comment>
<comment type="catalytic activity">
    <reaction evidence="7">
        <text>carbamoyl phosphate + L-ornithine = L-citrulline + phosphate + H(+)</text>
        <dbReference type="Rhea" id="RHEA:19513"/>
        <dbReference type="ChEBI" id="CHEBI:15378"/>
        <dbReference type="ChEBI" id="CHEBI:43474"/>
        <dbReference type="ChEBI" id="CHEBI:46911"/>
        <dbReference type="ChEBI" id="CHEBI:57743"/>
        <dbReference type="ChEBI" id="CHEBI:58228"/>
        <dbReference type="EC" id="2.1.3.3"/>
    </reaction>
</comment>
<comment type="activity regulation">
    <text evidence="4">Reversibly inhibited by inhibited by phaseolotoxin and octicidine.</text>
</comment>
<comment type="biophysicochemical properties">
    <kinetics>
        <KM evidence="4">0.7 mM for L-ornithine</KM>
        <KM evidence="4">0.7 mM for carbamoyl phosphate</KM>
    </kinetics>
    <phDependence>
        <text evidence="4">Optimum pH is between 8.5 and 9.5.</text>
    </phDependence>
</comment>
<comment type="pathway">
    <text evidence="7">Amino-acid biosynthesis; L-arginine biosynthesis; L-arginine from L-ornithine and carbamoyl phosphate: step 1/3.</text>
</comment>
<comment type="subunit">
    <text evidence="2">Homotrimer.</text>
</comment>
<comment type="subcellular location">
    <subcellularLocation>
        <location evidence="6">Cytoplasm</location>
    </subcellularLocation>
</comment>
<comment type="induction">
    <text evidence="3">Negatively regulated by ArgR.</text>
</comment>
<comment type="similarity">
    <text evidence="6">Belongs to the aspartate/ornithine carbamoyltransferase superfamily. OTCase family.</text>
</comment>
<feature type="initiator methionine" description="Removed" evidence="1">
    <location>
        <position position="1"/>
    </location>
</feature>
<feature type="chain" id="PRO_0000112991" description="Ornithine carbamoyltransferase 1, anabolic">
    <location>
        <begin position="2"/>
        <end position="306"/>
    </location>
</feature>
<feature type="binding site" evidence="2">
    <location>
        <begin position="53"/>
        <end position="56"/>
    </location>
    <ligand>
        <name>carbamoyl phosphate</name>
        <dbReference type="ChEBI" id="CHEBI:58228"/>
    </ligand>
</feature>
<feature type="binding site" evidence="2">
    <location>
        <position position="80"/>
    </location>
    <ligand>
        <name>carbamoyl phosphate</name>
        <dbReference type="ChEBI" id="CHEBI:58228"/>
    </ligand>
</feature>
<feature type="binding site" evidence="2">
    <location>
        <position position="104"/>
    </location>
    <ligand>
        <name>carbamoyl phosphate</name>
        <dbReference type="ChEBI" id="CHEBI:58228"/>
    </ligand>
</feature>
<feature type="binding site" evidence="2">
    <location>
        <begin position="131"/>
        <end position="134"/>
    </location>
    <ligand>
        <name>carbamoyl phosphate</name>
        <dbReference type="ChEBI" id="CHEBI:58228"/>
    </ligand>
</feature>
<feature type="binding site" evidence="2">
    <location>
        <position position="162"/>
    </location>
    <ligand>
        <name>L-ornithine</name>
        <dbReference type="ChEBI" id="CHEBI:46911"/>
    </ligand>
</feature>
<feature type="binding site" evidence="2">
    <location>
        <position position="219"/>
    </location>
    <ligand>
        <name>L-ornithine</name>
        <dbReference type="ChEBI" id="CHEBI:46911"/>
    </ligand>
</feature>
<feature type="binding site" evidence="2">
    <location>
        <begin position="223"/>
        <end position="224"/>
    </location>
    <ligand>
        <name>L-ornithine</name>
        <dbReference type="ChEBI" id="CHEBI:46911"/>
    </ligand>
</feature>
<feature type="binding site" evidence="2">
    <location>
        <begin position="259"/>
        <end position="260"/>
    </location>
    <ligand>
        <name>carbamoyl phosphate</name>
        <dbReference type="ChEBI" id="CHEBI:58228"/>
    </ligand>
</feature>
<feature type="binding site" evidence="2">
    <location>
        <position position="287"/>
    </location>
    <ligand>
        <name>carbamoyl phosphate</name>
        <dbReference type="ChEBI" id="CHEBI:58228"/>
    </ligand>
</feature>
<proteinExistence type="evidence at protein level"/>
<keyword id="KW-0028">Amino-acid biosynthesis</keyword>
<keyword id="KW-0055">Arginine biosynthesis</keyword>
<keyword id="KW-0963">Cytoplasm</keyword>
<keyword id="KW-0808">Transferase</keyword>
<organism>
    <name type="scientific">Pseudomonas savastanoi pv. phaseolicola</name>
    <name type="common">Pseudomonas syringae pv. phaseolicola</name>
    <dbReference type="NCBI Taxonomy" id="319"/>
    <lineage>
        <taxon>Bacteria</taxon>
        <taxon>Pseudomonadati</taxon>
        <taxon>Pseudomonadota</taxon>
        <taxon>Gammaproteobacteria</taxon>
        <taxon>Pseudomonadales</taxon>
        <taxon>Pseudomonadaceae</taxon>
        <taxon>Pseudomonas</taxon>
    </lineage>
</organism>